<dbReference type="EMBL" id="S47695">
    <property type="protein sequence ID" value="AAB23992.1"/>
    <property type="status" value="ALT_FRAME"/>
    <property type="molecule type" value="Genomic_DNA"/>
</dbReference>
<dbReference type="EMBL" id="Z35767">
    <property type="protein sequence ID" value="CAA84825.1"/>
    <property type="status" value="ALT_FRAME"/>
    <property type="molecule type" value="Genomic_DNA"/>
</dbReference>
<dbReference type="EMBL" id="BK006936">
    <property type="protein sequence ID" value="DAA07114.1"/>
    <property type="molecule type" value="Genomic_DNA"/>
</dbReference>
<dbReference type="PIR" id="S41221">
    <property type="entry name" value="S41221"/>
</dbReference>
<dbReference type="RefSeq" id="NP_009547.2">
    <property type="nucleotide sequence ID" value="NM_001178246.1"/>
</dbReference>
<dbReference type="PDB" id="6V8O">
    <property type="method" value="EM"/>
    <property type="resolution" value="3.07 A"/>
    <property type="chains" value="D=1-180"/>
</dbReference>
<dbReference type="PDB" id="6V92">
    <property type="method" value="EM"/>
    <property type="resolution" value="20.00 A"/>
    <property type="chains" value="D=1-180"/>
</dbReference>
<dbReference type="PDBsum" id="6V8O"/>
<dbReference type="PDBsum" id="6V92"/>
<dbReference type="EMDB" id="EMD-21107"/>
<dbReference type="EMDB" id="EMD-21114"/>
<dbReference type="SMR" id="P38210"/>
<dbReference type="BioGRID" id="32693">
    <property type="interactions" value="179"/>
</dbReference>
<dbReference type="ComplexPortal" id="CPX-1888">
    <property type="entry name" value="RSC chromatin remodelling complex, variant RSC2"/>
</dbReference>
<dbReference type="ComplexPortal" id="CPX-1889">
    <property type="entry name" value="RSC chromatin remodelling complex, variant RSC1"/>
</dbReference>
<dbReference type="DIP" id="DIP-3927N"/>
<dbReference type="FunCoup" id="P38210">
    <property type="interactions" value="122"/>
</dbReference>
<dbReference type="IntAct" id="P38210">
    <property type="interactions" value="31"/>
</dbReference>
<dbReference type="STRING" id="4932.YBL006C"/>
<dbReference type="iPTMnet" id="P38210"/>
<dbReference type="PaxDb" id="4932-YBL006C"/>
<dbReference type="PeptideAtlas" id="P38210"/>
<dbReference type="EnsemblFungi" id="YBL006C_mRNA">
    <property type="protein sequence ID" value="YBL006C"/>
    <property type="gene ID" value="YBL006C"/>
</dbReference>
<dbReference type="GeneID" id="852277"/>
<dbReference type="KEGG" id="sce:YBL006C"/>
<dbReference type="AGR" id="SGD:S000000102"/>
<dbReference type="SGD" id="S000000102">
    <property type="gene designation" value="LDB7"/>
</dbReference>
<dbReference type="VEuPathDB" id="FungiDB:YBL006C"/>
<dbReference type="eggNOG" id="ENOG502S2JC">
    <property type="taxonomic scope" value="Eukaryota"/>
</dbReference>
<dbReference type="HOGENOM" id="CLU_1366073_0_0_1"/>
<dbReference type="InParanoid" id="P38210"/>
<dbReference type="OMA" id="SIDFAHY"/>
<dbReference type="OrthoDB" id="4060948at2759"/>
<dbReference type="BioCyc" id="YEAST:G3O-28912-MONOMER"/>
<dbReference type="BioGRID-ORCS" id="852277">
    <property type="hits" value="9 hits in 10 CRISPR screens"/>
</dbReference>
<dbReference type="PRO" id="PR:P38210"/>
<dbReference type="Proteomes" id="UP000002311">
    <property type="component" value="Chromosome II"/>
</dbReference>
<dbReference type="RNAct" id="P38210">
    <property type="molecule type" value="protein"/>
</dbReference>
<dbReference type="GO" id="GO:0000785">
    <property type="term" value="C:chromatin"/>
    <property type="evidence" value="ECO:0000303"/>
    <property type="project" value="ComplexPortal"/>
</dbReference>
<dbReference type="GO" id="GO:0016586">
    <property type="term" value="C:RSC-type complex"/>
    <property type="evidence" value="ECO:0000314"/>
    <property type="project" value="UniProtKB"/>
</dbReference>
<dbReference type="GO" id="GO:0006338">
    <property type="term" value="P:chromatin remodeling"/>
    <property type="evidence" value="ECO:0000314"/>
    <property type="project" value="SGD"/>
</dbReference>
<dbReference type="GO" id="GO:0006337">
    <property type="term" value="P:nucleosome disassembly"/>
    <property type="evidence" value="ECO:0000314"/>
    <property type="project" value="SGD"/>
</dbReference>
<dbReference type="GO" id="GO:0006368">
    <property type="term" value="P:transcription elongation by RNA polymerase II"/>
    <property type="evidence" value="ECO:0000314"/>
    <property type="project" value="SGD"/>
</dbReference>
<dbReference type="InterPro" id="IPR013895">
    <property type="entry name" value="Rsc14"/>
</dbReference>
<dbReference type="Pfam" id="PF08586">
    <property type="entry name" value="Rsc14"/>
    <property type="match status" value="1"/>
</dbReference>
<gene>
    <name type="primary">LDB7</name>
    <name type="synonym">RSC14</name>
    <name type="ordered locus">YBL006C</name>
    <name type="ORF">YBL0322</name>
</gene>
<feature type="chain" id="PRO_0000076230" description="Chromatin structure-remodeling complex protein RSC14">
    <location>
        <begin position="1"/>
        <end position="180"/>
    </location>
</feature>
<feature type="helix" evidence="4">
    <location>
        <begin position="8"/>
        <end position="17"/>
    </location>
</feature>
<feature type="helix" evidence="4">
    <location>
        <begin position="28"/>
        <end position="34"/>
    </location>
</feature>
<feature type="strand" evidence="4">
    <location>
        <begin position="66"/>
        <end position="68"/>
    </location>
</feature>
<feature type="helix" evidence="4">
    <location>
        <begin position="73"/>
        <end position="78"/>
    </location>
</feature>
<feature type="strand" evidence="4">
    <location>
        <begin position="85"/>
        <end position="88"/>
    </location>
</feature>
<feature type="helix" evidence="4">
    <location>
        <begin position="94"/>
        <end position="98"/>
    </location>
</feature>
<feature type="helix" evidence="4">
    <location>
        <begin position="102"/>
        <end position="112"/>
    </location>
</feature>
<feature type="helix" evidence="4">
    <location>
        <begin position="116"/>
        <end position="124"/>
    </location>
</feature>
<comment type="function">
    <text evidence="1 2">Component of the chromatin structure-remodeling complex (RSC), which is involved in transcription regulation and nucleosome positioning. RSC is responsible for the transfer of a histone octamer from a nucleosome core particle to naked DNA. The reaction requires ATP and involves an activated RSC-nucleosome intermediate. Remodeling reaction also involves DNA translocation, DNA twist and conformational change. As a reconfigurer of centromeric and flanking nucleosomes, RSC complex is required both for proper kinetochore function in chromosome segregation and, via a PKC1-dependent signaling pathway, for organization of the cellular cytoskeleton. Together with HTL1, NPL6, RSC3, RSC30 components, defines a fungal-specific module within the RSC complex that plays a role in many cellular functions including the maintenance of cell wall integrity. May be involved in the transfer of mannosylphosphate (MP) groups into N-linked oligosaccharides.</text>
</comment>
<comment type="subunit">
    <text evidence="2">Interacts with STH1, RSC3 and ARP9. Component of the two forms of the RSC complex composed of at least either RSC1 or RSC2, and ARP7, ARP9, LDB7, NPL6, RSC3, RSC30, RSC4, RSC58, RSC6, RSC8, RSC9, SFH1, STH1, HTL1 and probably RTT102. The complexes interact with histone and histone variant components of centromeric chromatin. Component of a fungal-specific module (HTL1-LDB7-NPL6-RSC3-RSC30) within the RSC complex.</text>
</comment>
<comment type="interaction">
    <interactant intactId="EBI-21189">
        <id>P38210</id>
    </interactant>
    <interactant intactId="EBI-18410">
        <id>P32597</id>
        <label>STH1</label>
    </interactant>
    <organismsDiffer>false</organismsDiffer>
    <experiments>3</experiments>
</comment>
<comment type="subcellular location">
    <subcellularLocation>
        <location>Nucleus</location>
    </subcellularLocation>
</comment>
<comment type="sequence caution" evidence="3">
    <conflict type="frameshift">
        <sequence resource="EMBL-CDS" id="AAB23992"/>
    </conflict>
</comment>
<comment type="sequence caution" evidence="3">
    <conflict type="frameshift">
        <sequence resource="EMBL-CDS" id="CAA84825"/>
    </conflict>
</comment>
<protein>
    <recommendedName>
        <fullName>Chromatin structure-remodeling complex protein RSC14</fullName>
    </recommendedName>
    <alternativeName>
        <fullName>Low dye-binding protein 7</fullName>
    </alternativeName>
    <alternativeName>
        <fullName>Remodel the structure of chromatin complex subunit 14</fullName>
    </alternativeName>
</protein>
<organism>
    <name type="scientific">Saccharomyces cerevisiae (strain ATCC 204508 / S288c)</name>
    <name type="common">Baker's yeast</name>
    <dbReference type="NCBI Taxonomy" id="559292"/>
    <lineage>
        <taxon>Eukaryota</taxon>
        <taxon>Fungi</taxon>
        <taxon>Dikarya</taxon>
        <taxon>Ascomycota</taxon>
        <taxon>Saccharomycotina</taxon>
        <taxon>Saccharomycetes</taxon>
        <taxon>Saccharomycetales</taxon>
        <taxon>Saccharomycetaceae</taxon>
        <taxon>Saccharomyces</taxon>
    </lineage>
</organism>
<reference key="1">
    <citation type="journal article" date="1992" name="Yeast">
        <title>Sequence of a 12.7 kb segment of yeast chromosome II identifies a PDR-like gene and several new open reading frames.</title>
        <authorList>
            <person name="Delaveau T."/>
            <person name="Jacq C."/>
            <person name="Perea J."/>
        </authorList>
    </citation>
    <scope>NUCLEOTIDE SEQUENCE [GENOMIC DNA]</scope>
    <source>
        <strain>ATCC 204508 / S288c</strain>
    </source>
</reference>
<reference key="2">
    <citation type="journal article" date="1994" name="EMBO J.">
        <title>Complete DNA sequence of yeast chromosome II.</title>
        <authorList>
            <person name="Feldmann H."/>
            <person name="Aigle M."/>
            <person name="Aljinovic G."/>
            <person name="Andre B."/>
            <person name="Baclet M.C."/>
            <person name="Barthe C."/>
            <person name="Baur A."/>
            <person name="Becam A.-M."/>
            <person name="Biteau N."/>
            <person name="Boles E."/>
            <person name="Brandt T."/>
            <person name="Brendel M."/>
            <person name="Brueckner M."/>
            <person name="Bussereau F."/>
            <person name="Christiansen C."/>
            <person name="Contreras R."/>
            <person name="Crouzet M."/>
            <person name="Cziepluch C."/>
            <person name="Demolis N."/>
            <person name="Delaveau T."/>
            <person name="Doignon F."/>
            <person name="Domdey H."/>
            <person name="Duesterhus S."/>
            <person name="Dubois E."/>
            <person name="Dujon B."/>
            <person name="El Bakkoury M."/>
            <person name="Entian K.-D."/>
            <person name="Feuermann M."/>
            <person name="Fiers W."/>
            <person name="Fobo G.M."/>
            <person name="Fritz C."/>
            <person name="Gassenhuber J."/>
            <person name="Glansdorff N."/>
            <person name="Goffeau A."/>
            <person name="Grivell L.A."/>
            <person name="de Haan M."/>
            <person name="Hein C."/>
            <person name="Herbert C.J."/>
            <person name="Hollenberg C.P."/>
            <person name="Holmstroem K."/>
            <person name="Jacq C."/>
            <person name="Jacquet M."/>
            <person name="Jauniaux J.-C."/>
            <person name="Jonniaux J.-L."/>
            <person name="Kallesoee T."/>
            <person name="Kiesau P."/>
            <person name="Kirchrath L."/>
            <person name="Koetter P."/>
            <person name="Korol S."/>
            <person name="Liebl S."/>
            <person name="Logghe M."/>
            <person name="Lohan A.J.E."/>
            <person name="Louis E.J."/>
            <person name="Li Z.Y."/>
            <person name="Maat M.J."/>
            <person name="Mallet L."/>
            <person name="Mannhaupt G."/>
            <person name="Messenguy F."/>
            <person name="Miosga T."/>
            <person name="Molemans F."/>
            <person name="Mueller S."/>
            <person name="Nasr F."/>
            <person name="Obermaier B."/>
            <person name="Perea J."/>
            <person name="Pierard A."/>
            <person name="Piravandi E."/>
            <person name="Pohl F.M."/>
            <person name="Pohl T.M."/>
            <person name="Potier S."/>
            <person name="Proft M."/>
            <person name="Purnelle B."/>
            <person name="Ramezani Rad M."/>
            <person name="Rieger M."/>
            <person name="Rose M."/>
            <person name="Schaaff-Gerstenschlaeger I."/>
            <person name="Scherens B."/>
            <person name="Schwarzlose C."/>
            <person name="Skala J."/>
            <person name="Slonimski P.P."/>
            <person name="Smits P.H.M."/>
            <person name="Souciet J.-L."/>
            <person name="Steensma H.Y."/>
            <person name="Stucka R."/>
            <person name="Urrestarazu L.A."/>
            <person name="van der Aart Q.J.M."/>
            <person name="Van Dyck L."/>
            <person name="Vassarotti A."/>
            <person name="Vetter I."/>
            <person name="Vierendeels F."/>
            <person name="Vissers S."/>
            <person name="Wagner G."/>
            <person name="de Wergifosse P."/>
            <person name="Wolfe K.H."/>
            <person name="Zagulski M."/>
            <person name="Zimmermann F.K."/>
            <person name="Mewes H.-W."/>
            <person name="Kleine K."/>
        </authorList>
    </citation>
    <scope>NUCLEOTIDE SEQUENCE [LARGE SCALE GENOMIC DNA]</scope>
    <source>
        <strain>ATCC 204508 / S288c</strain>
    </source>
</reference>
<reference key="3">
    <citation type="journal article" date="2014" name="G3 (Bethesda)">
        <title>The reference genome sequence of Saccharomyces cerevisiae: Then and now.</title>
        <authorList>
            <person name="Engel S.R."/>
            <person name="Dietrich F.S."/>
            <person name="Fisk D.G."/>
            <person name="Binkley G."/>
            <person name="Balakrishnan R."/>
            <person name="Costanzo M.C."/>
            <person name="Dwight S.S."/>
            <person name="Hitz B.C."/>
            <person name="Karra K."/>
            <person name="Nash R.S."/>
            <person name="Weng S."/>
            <person name="Wong E.D."/>
            <person name="Lloyd P."/>
            <person name="Skrzypek M.S."/>
            <person name="Miyasato S.R."/>
            <person name="Simison M."/>
            <person name="Cherry J.M."/>
        </authorList>
    </citation>
    <scope>GENOME REANNOTATION</scope>
    <source>
        <strain>ATCC 204508 / S288c</strain>
    </source>
</reference>
<reference key="4">
    <citation type="journal article" date="2003" name="Nature">
        <title>Sequencing and comparison of yeast species to identify genes and regulatory elements.</title>
        <authorList>
            <person name="Kellis M."/>
            <person name="Patterson N."/>
            <person name="Endrizzi M."/>
            <person name="Birren B.W."/>
            <person name="Lander E.S."/>
        </authorList>
    </citation>
    <scope>IDENTIFICATION OF FRAMESHIFT</scope>
</reference>
<reference key="5">
    <citation type="journal article" date="2003" name="Yeast">
        <title>Screening for new yeast mutants affected in mannosylphosphorylation of cell wall mannoproteins.</title>
        <authorList>
            <person name="Conde R."/>
            <person name="Pablo G."/>
            <person name="Cueva R."/>
            <person name="Larriba G."/>
        </authorList>
    </citation>
    <scope>FUNCTION</scope>
</reference>
<reference key="6">
    <citation type="journal article" date="2006" name="Genetics">
        <title>The RSC chromatin remodeling complex bears an essential fungal-specific protein module with broad functional roles.</title>
        <authorList>
            <person name="Wilson B."/>
            <person name="Erdjument-Bromage H."/>
            <person name="Tempst P."/>
            <person name="Cairns B.R."/>
        </authorList>
    </citation>
    <scope>FUNCTION</scope>
    <scope>IDENTIFICATION IN THE RSC COMPLEX</scope>
    <scope>INTERACTION WITH ARP9; RSC3 AND STH1</scope>
</reference>
<accession>P38210</accession>
<accession>D6VPZ4</accession>
<sequence>MSGSNMGYYDVLAGLSALEKSSQVVFSATELQQLTQQSHATDKGIEGSENSKAKVSKPKRVAVHGYLGGKVSLADAAQVEYEVGHSLLGSYVPRQQLEALSSVDFSHHFHRTLECKAALETHDVFLAGAGQLSLPFQSHIESPRNSEAKRKRKVIICKRCQSRFIGSHRRSQLREHACVD</sequence>
<keyword id="KW-0002">3D-structure</keyword>
<keyword id="KW-0156">Chromatin regulator</keyword>
<keyword id="KW-0539">Nucleus</keyword>
<keyword id="KW-1185">Reference proteome</keyword>
<keyword id="KW-0804">Transcription</keyword>
<keyword id="KW-0805">Transcription regulation</keyword>
<proteinExistence type="evidence at protein level"/>
<evidence type="ECO:0000269" key="1">
    <source>
    </source>
</evidence>
<evidence type="ECO:0000269" key="2">
    <source>
    </source>
</evidence>
<evidence type="ECO:0000305" key="3"/>
<evidence type="ECO:0007829" key="4">
    <source>
        <dbReference type="PDB" id="6V8O"/>
    </source>
</evidence>
<name>LDB7_YEAST</name>